<sequence length="330" mass="35423">MSSVKNILSFVALFAGVKTAYAGLNSPGHNNVAIYWGADVDVIPLAFAVSIKGPGGVPQINFSNQGDPCKPFPGTDLLHCPQIGEDIKTCQKKGKTILLSIGGATYSEGGFRSAEDAVAGANLLWDTFGPVKSSNSSVLRPFDDAVIDGFDLDFEATVLNMVPFAKQLRTLYDAEKSKTFYLTAAPQCPYPDLYNKEMLEGGVKFDALFIQFYNNFCGLNNFVLGSQSQDKFNFAEWDNFAKKVSANPDVKIMVGAPANKGAASSGYIDAQTLVSVINWSKTFSSFGGVMMWDASQAWANGNFTSAVKGALSAGNSRVVRMSYAGYHSGY</sequence>
<gene>
    <name type="ORF">ARB_03514</name>
</gene>
<name>CHI33_ARTBC</name>
<organism>
    <name type="scientific">Arthroderma benhamiae (strain ATCC MYA-4681 / CBS 112371)</name>
    <name type="common">Trichophyton mentagrophytes</name>
    <dbReference type="NCBI Taxonomy" id="663331"/>
    <lineage>
        <taxon>Eukaryota</taxon>
        <taxon>Fungi</taxon>
        <taxon>Dikarya</taxon>
        <taxon>Ascomycota</taxon>
        <taxon>Pezizomycotina</taxon>
        <taxon>Eurotiomycetes</taxon>
        <taxon>Eurotiomycetidae</taxon>
        <taxon>Onygenales</taxon>
        <taxon>Arthrodermataceae</taxon>
        <taxon>Trichophyton</taxon>
    </lineage>
</organism>
<feature type="signal peptide" evidence="2">
    <location>
        <begin position="1"/>
        <end position="22"/>
    </location>
</feature>
<feature type="chain" id="PRO_0000434775" description="Class III chitinase ARB_03514">
    <location>
        <begin position="23"/>
        <end position="330"/>
    </location>
</feature>
<feature type="domain" description="GH18" evidence="4">
    <location>
        <begin position="23"/>
        <end position="314"/>
    </location>
</feature>
<feature type="active site" description="Proton donor" evidence="4">
    <location>
        <position position="155"/>
    </location>
</feature>
<feature type="glycosylation site" description="N-linked (GlcNAc...) asparagine" evidence="3">
    <location>
        <position position="61"/>
    </location>
</feature>
<feature type="glycosylation site" description="N-linked (GlcNAc...) asparagine" evidence="3">
    <location>
        <position position="135"/>
    </location>
</feature>
<feature type="glycosylation site" description="N-linked (GlcNAc...) asparagine" evidence="3">
    <location>
        <position position="278"/>
    </location>
</feature>
<feature type="glycosylation site" description="N-linked (GlcNAc...) asparagine" evidence="3">
    <location>
        <position position="302"/>
    </location>
</feature>
<accession>D4B4X4</accession>
<comment type="function">
    <text evidence="1">Secreted chitinase involved in the degradation of chitin, a component of the cell walls of fungi and exoskeletal elements of some animals (including worms and arthropods) (By similarity). Plays a morphogenetic role during apical growth, cell division and differentiation (cell wall morphogenesis) (By similarity).</text>
</comment>
<comment type="catalytic activity">
    <reaction evidence="1">
        <text>Random endo-hydrolysis of N-acetyl-beta-D-glucosaminide (1-&gt;4)-beta-linkages in chitin and chitodextrins.</text>
        <dbReference type="EC" id="3.2.1.14"/>
    </reaction>
</comment>
<comment type="subunit">
    <text evidence="1">Monomer.</text>
</comment>
<comment type="subcellular location">
    <subcellularLocation>
        <location evidence="5">Secreted</location>
    </subcellularLocation>
</comment>
<comment type="similarity">
    <text evidence="6">Belongs to the glycosyl hydrolase 18 family. Chitinase class III subfamily.</text>
</comment>
<comment type="sequence caution" evidence="6">
    <conflict type="erroneous gene model prediction">
        <sequence resource="EMBL-CDS" id="EFE29619"/>
    </conflict>
</comment>
<evidence type="ECO:0000250" key="1">
    <source>
        <dbReference type="UniProtKB" id="Q12713"/>
    </source>
</evidence>
<evidence type="ECO:0000255" key="2"/>
<evidence type="ECO:0000255" key="3">
    <source>
        <dbReference type="PROSITE-ProRule" id="PRU00498"/>
    </source>
</evidence>
<evidence type="ECO:0000255" key="4">
    <source>
        <dbReference type="PROSITE-ProRule" id="PRU01258"/>
    </source>
</evidence>
<evidence type="ECO:0000269" key="5">
    <source>
    </source>
</evidence>
<evidence type="ECO:0000305" key="6"/>
<reference key="1">
    <citation type="journal article" date="2011" name="Genome Biol.">
        <title>Comparative and functional genomics provide insights into the pathogenicity of dermatophytic fungi.</title>
        <authorList>
            <person name="Burmester A."/>
            <person name="Shelest E."/>
            <person name="Gloeckner G."/>
            <person name="Heddergott C."/>
            <person name="Schindler S."/>
            <person name="Staib P."/>
            <person name="Heidel A."/>
            <person name="Felder M."/>
            <person name="Petzold A."/>
            <person name="Szafranski K."/>
            <person name="Feuermann M."/>
            <person name="Pedruzzi I."/>
            <person name="Priebe S."/>
            <person name="Groth M."/>
            <person name="Winkler R."/>
            <person name="Li W."/>
            <person name="Kniemeyer O."/>
            <person name="Schroeckh V."/>
            <person name="Hertweck C."/>
            <person name="Hube B."/>
            <person name="White T.C."/>
            <person name="Platzer M."/>
            <person name="Guthke R."/>
            <person name="Heitman J."/>
            <person name="Woestemeyer J."/>
            <person name="Zipfel P.F."/>
            <person name="Monod M."/>
            <person name="Brakhage A.A."/>
        </authorList>
    </citation>
    <scope>NUCLEOTIDE SEQUENCE [LARGE SCALE GENOMIC DNA]</scope>
    <source>
        <strain>ATCC MYA-4681 / CBS 112371</strain>
    </source>
</reference>
<reference key="2">
    <citation type="journal article" date="2011" name="Proteomics">
        <title>Identification of novel secreted proteases during extracellular proteolysis by dermatophytes at acidic pH.</title>
        <authorList>
            <person name="Sriranganadane D."/>
            <person name="Waridel P."/>
            <person name="Salamin K."/>
            <person name="Feuermann M."/>
            <person name="Mignon B."/>
            <person name="Staib P."/>
            <person name="Neuhaus J.M."/>
            <person name="Quadroni M."/>
            <person name="Monod M."/>
        </authorList>
    </citation>
    <scope>IDENTIFICATION BY MASS SPECTROMETRY</scope>
    <scope>SUBCELLULAR LOCATION</scope>
</reference>
<protein>
    <recommendedName>
        <fullName evidence="6">Class III chitinase ARB_03514</fullName>
        <ecNumber evidence="1">3.2.1.14</ecNumber>
    </recommendedName>
    <alternativeName>
        <fullName evidence="6">Endochitinase ARB_03514</fullName>
    </alternativeName>
</protein>
<dbReference type="EC" id="3.2.1.14" evidence="1"/>
<dbReference type="EMBL" id="ABSU01000035">
    <property type="protein sequence ID" value="EFE29619.1"/>
    <property type="status" value="ALT_SEQ"/>
    <property type="molecule type" value="Genomic_DNA"/>
</dbReference>
<dbReference type="RefSeq" id="XP_003010259.1">
    <property type="nucleotide sequence ID" value="XM_003010213.1"/>
</dbReference>
<dbReference type="SMR" id="D4B4X4"/>
<dbReference type="STRING" id="663331.D4B4X4"/>
<dbReference type="GeneID" id="9525527"/>
<dbReference type="KEGG" id="abe:ARB_03514"/>
<dbReference type="eggNOG" id="KOG4701">
    <property type="taxonomic scope" value="Eukaryota"/>
</dbReference>
<dbReference type="HOGENOM" id="CLU_007818_3_0_1"/>
<dbReference type="OrthoDB" id="2425929at2759"/>
<dbReference type="Proteomes" id="UP000008866">
    <property type="component" value="Unassembled WGS sequence"/>
</dbReference>
<dbReference type="GO" id="GO:0005576">
    <property type="term" value="C:extracellular region"/>
    <property type="evidence" value="ECO:0007669"/>
    <property type="project" value="UniProtKB-SubCell"/>
</dbReference>
<dbReference type="GO" id="GO:0008061">
    <property type="term" value="F:chitin binding"/>
    <property type="evidence" value="ECO:0007669"/>
    <property type="project" value="UniProtKB-KW"/>
</dbReference>
<dbReference type="GO" id="GO:0008843">
    <property type="term" value="F:endochitinase activity"/>
    <property type="evidence" value="ECO:0007669"/>
    <property type="project" value="UniProtKB-EC"/>
</dbReference>
<dbReference type="GO" id="GO:0006032">
    <property type="term" value="P:chitin catabolic process"/>
    <property type="evidence" value="ECO:0007669"/>
    <property type="project" value="UniProtKB-KW"/>
</dbReference>
<dbReference type="GO" id="GO:0000272">
    <property type="term" value="P:polysaccharide catabolic process"/>
    <property type="evidence" value="ECO:0007669"/>
    <property type="project" value="UniProtKB-KW"/>
</dbReference>
<dbReference type="CDD" id="cd02877">
    <property type="entry name" value="GH18_hevamine_XipI_class_III"/>
    <property type="match status" value="1"/>
</dbReference>
<dbReference type="Gene3D" id="3.20.20.80">
    <property type="entry name" value="Glycosidases"/>
    <property type="match status" value="1"/>
</dbReference>
<dbReference type="InterPro" id="IPR045321">
    <property type="entry name" value="Cts1-like"/>
</dbReference>
<dbReference type="InterPro" id="IPR001223">
    <property type="entry name" value="Glyco_hydro18_cat"/>
</dbReference>
<dbReference type="InterPro" id="IPR001579">
    <property type="entry name" value="Glyco_hydro_18_chit_AS"/>
</dbReference>
<dbReference type="InterPro" id="IPR017853">
    <property type="entry name" value="Glycoside_hydrolase_SF"/>
</dbReference>
<dbReference type="InterPro" id="IPR050542">
    <property type="entry name" value="Glycosyl_Hydrlase18_Chitinase"/>
</dbReference>
<dbReference type="PANTHER" id="PTHR45708">
    <property type="entry name" value="ENDOCHITINASE"/>
    <property type="match status" value="1"/>
</dbReference>
<dbReference type="PANTHER" id="PTHR45708:SF49">
    <property type="entry name" value="ENDOCHITINASE"/>
    <property type="match status" value="1"/>
</dbReference>
<dbReference type="Pfam" id="PF00704">
    <property type="entry name" value="Glyco_hydro_18"/>
    <property type="match status" value="1"/>
</dbReference>
<dbReference type="SUPFAM" id="SSF51445">
    <property type="entry name" value="(Trans)glycosidases"/>
    <property type="match status" value="1"/>
</dbReference>
<dbReference type="PROSITE" id="PS01095">
    <property type="entry name" value="GH18_1"/>
    <property type="match status" value="1"/>
</dbReference>
<dbReference type="PROSITE" id="PS51910">
    <property type="entry name" value="GH18_2"/>
    <property type="match status" value="1"/>
</dbReference>
<keyword id="KW-0119">Carbohydrate metabolism</keyword>
<keyword id="KW-0146">Chitin degradation</keyword>
<keyword id="KW-0147">Chitin-binding</keyword>
<keyword id="KW-0325">Glycoprotein</keyword>
<keyword id="KW-0326">Glycosidase</keyword>
<keyword id="KW-0378">Hydrolase</keyword>
<keyword id="KW-0624">Polysaccharide degradation</keyword>
<keyword id="KW-1185">Reference proteome</keyword>
<keyword id="KW-0964">Secreted</keyword>
<keyword id="KW-0732">Signal</keyword>
<proteinExistence type="evidence at protein level"/>